<protein>
    <recommendedName>
        <fullName>Semaphorin-3D</fullName>
    </recommendedName>
    <alternativeName>
        <fullName>Collapsin-2</fullName>
        <shortName>COLL-2</shortName>
    </alternativeName>
</protein>
<feature type="signal peptide" evidence="2">
    <location>
        <begin position="1"/>
        <end position="24"/>
    </location>
</feature>
<feature type="chain" id="PRO_0000032315" description="Semaphorin-3D">
    <location>
        <begin position="25"/>
        <end position="761"/>
    </location>
</feature>
<feature type="domain" description="Sema" evidence="3">
    <location>
        <begin position="32"/>
        <end position="519"/>
    </location>
</feature>
<feature type="domain" description="Ig-like C2-type">
    <location>
        <begin position="552"/>
        <end position="670"/>
    </location>
</feature>
<feature type="region of interest" description="Disordered" evidence="4">
    <location>
        <begin position="728"/>
        <end position="761"/>
    </location>
</feature>
<feature type="compositionally biased region" description="Basic residues" evidence="4">
    <location>
        <begin position="728"/>
        <end position="754"/>
    </location>
</feature>
<feature type="glycosylation site" description="N-linked (GlcNAc...) asparagine" evidence="2">
    <location>
        <position position="127"/>
    </location>
</feature>
<feature type="glycosylation site" description="N-linked (GlcNAc...) asparagine" evidence="2">
    <location>
        <position position="595"/>
    </location>
</feature>
<feature type="disulfide bond" evidence="1">
    <location>
        <begin position="105"/>
        <end position="116"/>
    </location>
</feature>
<feature type="disulfide bond" evidence="1">
    <location>
        <begin position="134"/>
        <end position="143"/>
    </location>
</feature>
<feature type="disulfide bond" evidence="1">
    <location>
        <begin position="274"/>
        <end position="386"/>
    </location>
</feature>
<feature type="disulfide bond" evidence="1">
    <location>
        <begin position="298"/>
        <end position="346"/>
    </location>
</feature>
<feature type="disulfide bond" evidence="1">
    <location>
        <begin position="522"/>
        <end position="540"/>
    </location>
</feature>
<feature type="disulfide bond" evidence="1">
    <location>
        <begin position="653"/>
        <end position="719"/>
    </location>
</feature>
<keyword id="KW-0217">Developmental protein</keyword>
<keyword id="KW-0221">Differentiation</keyword>
<keyword id="KW-1015">Disulfide bond</keyword>
<keyword id="KW-0325">Glycoprotein</keyword>
<keyword id="KW-0393">Immunoglobulin domain</keyword>
<keyword id="KW-0524">Neurogenesis</keyword>
<keyword id="KW-1185">Reference proteome</keyword>
<keyword id="KW-0964">Secreted</keyword>
<keyword id="KW-0732">Signal</keyword>
<comment type="function">
    <text>Induces the collapse and paralysis of neuronal growth cones. Could potentially act as repulsive cues toward specific neuronal populations. Binds to neuropilin.</text>
</comment>
<comment type="subcellular location">
    <subcellularLocation>
        <location>Secreted</location>
    </subcellularLocation>
</comment>
<comment type="tissue specificity">
    <text>Developing spinal cord and developing visual system. Collapsin-1, -2, -3, and -5 bind to overlapping but distinct axon tracts.</text>
</comment>
<comment type="domain">
    <text>Strong binding to neuropilin is mediated by the carboxy third of the protein.</text>
</comment>
<comment type="similarity">
    <text evidence="5">Belongs to the semaphorin family.</text>
</comment>
<reference key="1">
    <citation type="journal article" date="1995" name="Neuron">
        <title>A family of molecules related to collapsin in the embryonic chick nervous system.</title>
        <authorList>
            <person name="Luo Y."/>
            <person name="Shepherd I."/>
            <person name="Li J."/>
            <person name="Renzi M.J."/>
            <person name="Chang S."/>
            <person name="Raper J.A."/>
        </authorList>
    </citation>
    <scope>NUCLEOTIDE SEQUENCE [MRNA]</scope>
</reference>
<gene>
    <name type="primary">SEMA3D</name>
    <name type="synonym">COLL2</name>
</gene>
<accession>Q90663</accession>
<proteinExistence type="evidence at transcript level"/>
<sequence>MRASQVPNACSLLSLAMLFFPVTGTSKQNIPRLKLSYKDLLLSNSCIPFLGSTEGLDFRTLLLDEERGRLLVGAKDHIFLLNLVDLNKNVKKIYWPAAKEKMELCKLAGKDAHTDCANFIRVLQPYNRTHVYVCGTGAFHPLCGYIELGTHKEETIFRLDTQNLESGRLKCPFDPQQPFASVMADEYLYAGTASDFLGKDTALTRSLGPSHDHHYIRTDISEHYWLTGAKFIATFPIPDTYNPDDDKIYFFFREISQDSSTSDKTILSRVGRVCKNDMGGQRSLINKWTTFLKARLVCSIPGPEGADTHFDELQDIFLLSTRDERNPLVYGVFTTTSSVFKGSAVCVYSMADIRAVFNGPYAHKESADHRWVQYEGRIPYPRPGTCPSKTYDPLIKSTRDFPDEVISFIKRHPLMYKSVYPLTGGPVFTRINVDYRLTQIVVDHVMAEDGQYDVIFLGTDIGTVLKAVSITKEKWTKEEVVLEELQIFKHPSFISTMEISQKQQQLYIGSRDGLVQLSLHRCHTYGKACADCCLARDPYCAWDGNSCSRYAPTSKRRARRQDVKYGDPVAQCWDVEDSISHETADEKVIFGIEFNSTFLECIPKSQQASIRWYIQRSGEEHREELKADERIIKTEHGLLIRSLQRRDAGAYFCKAQEHTFIHTIVKLNLNVIENGQMESTQKTEDEEGRVRDLLTESRLRYKDYIQLVSSPSFSLDEYCEQMWHREKRRQRNKGGAKWKHVQEMKKKRNRRHHEPARPPST</sequence>
<evidence type="ECO:0000250" key="1"/>
<evidence type="ECO:0000255" key="2"/>
<evidence type="ECO:0000255" key="3">
    <source>
        <dbReference type="PROSITE-ProRule" id="PRU00352"/>
    </source>
</evidence>
<evidence type="ECO:0000256" key="4">
    <source>
        <dbReference type="SAM" id="MobiDB-lite"/>
    </source>
</evidence>
<evidence type="ECO:0000305" key="5"/>
<organism>
    <name type="scientific">Gallus gallus</name>
    <name type="common">Chicken</name>
    <dbReference type="NCBI Taxonomy" id="9031"/>
    <lineage>
        <taxon>Eukaryota</taxon>
        <taxon>Metazoa</taxon>
        <taxon>Chordata</taxon>
        <taxon>Craniata</taxon>
        <taxon>Vertebrata</taxon>
        <taxon>Euteleostomi</taxon>
        <taxon>Archelosauria</taxon>
        <taxon>Archosauria</taxon>
        <taxon>Dinosauria</taxon>
        <taxon>Saurischia</taxon>
        <taxon>Theropoda</taxon>
        <taxon>Coelurosauria</taxon>
        <taxon>Aves</taxon>
        <taxon>Neognathae</taxon>
        <taxon>Galloanserae</taxon>
        <taxon>Galliformes</taxon>
        <taxon>Phasianidae</taxon>
        <taxon>Phasianinae</taxon>
        <taxon>Gallus</taxon>
    </lineage>
</organism>
<name>SEM3D_CHICK</name>
<dbReference type="EMBL" id="U28240">
    <property type="protein sequence ID" value="AAA86896.1"/>
    <property type="molecule type" value="mRNA"/>
</dbReference>
<dbReference type="RefSeq" id="NP_990704.1">
    <property type="nucleotide sequence ID" value="NM_205373.1"/>
</dbReference>
<dbReference type="RefSeq" id="XP_015150788.1">
    <property type="nucleotide sequence ID" value="XM_015295302.1"/>
</dbReference>
<dbReference type="RefSeq" id="XP_015150855.1">
    <property type="nucleotide sequence ID" value="XM_015295369.1"/>
</dbReference>
<dbReference type="RefSeq" id="XP_046762877.1">
    <property type="nucleotide sequence ID" value="XM_046906921.1"/>
</dbReference>
<dbReference type="RefSeq" id="XP_046762878.1">
    <property type="nucleotide sequence ID" value="XM_046906922.1"/>
</dbReference>
<dbReference type="RefSeq" id="XP_046762879.1">
    <property type="nucleotide sequence ID" value="XM_046906923.1"/>
</dbReference>
<dbReference type="RefSeq" id="XP_046762880.1">
    <property type="nucleotide sequence ID" value="XM_046906924.1"/>
</dbReference>
<dbReference type="SMR" id="Q90663"/>
<dbReference type="FunCoup" id="Q90663">
    <property type="interactions" value="21"/>
</dbReference>
<dbReference type="STRING" id="9031.ENSGALP00000010582"/>
<dbReference type="GlyCosmos" id="Q90663">
    <property type="glycosylation" value="2 sites, No reported glycans"/>
</dbReference>
<dbReference type="GlyGen" id="Q90663">
    <property type="glycosylation" value="2 sites"/>
</dbReference>
<dbReference type="PaxDb" id="9031-ENSGALP00000010582"/>
<dbReference type="GeneID" id="396332"/>
<dbReference type="KEGG" id="gga:396332"/>
<dbReference type="CTD" id="223117"/>
<dbReference type="VEuPathDB" id="HostDB:geneid_396332"/>
<dbReference type="eggNOG" id="KOG3611">
    <property type="taxonomic scope" value="Eukaryota"/>
</dbReference>
<dbReference type="HOGENOM" id="CLU_009051_5_0_1"/>
<dbReference type="InParanoid" id="Q90663"/>
<dbReference type="OrthoDB" id="9988752at2759"/>
<dbReference type="PhylomeDB" id="Q90663"/>
<dbReference type="TreeFam" id="TF316102"/>
<dbReference type="PRO" id="PR:Q90663"/>
<dbReference type="Proteomes" id="UP000000539">
    <property type="component" value="Chromosome 1"/>
</dbReference>
<dbReference type="Bgee" id="ENSGALG00000006563">
    <property type="expression patterns" value="Expressed in lung and 10 other cell types or tissues"/>
</dbReference>
<dbReference type="GO" id="GO:0005615">
    <property type="term" value="C:extracellular space"/>
    <property type="evidence" value="ECO:0000314"/>
    <property type="project" value="AgBase"/>
</dbReference>
<dbReference type="GO" id="GO:0005886">
    <property type="term" value="C:plasma membrane"/>
    <property type="evidence" value="ECO:0000318"/>
    <property type="project" value="GO_Central"/>
</dbReference>
<dbReference type="GO" id="GO:0045499">
    <property type="term" value="F:chemorepellent activity"/>
    <property type="evidence" value="ECO:0000318"/>
    <property type="project" value="GO_Central"/>
</dbReference>
<dbReference type="GO" id="GO:0038191">
    <property type="term" value="F:neuropilin binding"/>
    <property type="evidence" value="ECO:0000353"/>
    <property type="project" value="AgBase"/>
</dbReference>
<dbReference type="GO" id="GO:0030215">
    <property type="term" value="F:semaphorin receptor binding"/>
    <property type="evidence" value="ECO:0000318"/>
    <property type="project" value="GO_Central"/>
</dbReference>
<dbReference type="GO" id="GO:0007411">
    <property type="term" value="P:axon guidance"/>
    <property type="evidence" value="ECO:0000318"/>
    <property type="project" value="GO_Central"/>
</dbReference>
<dbReference type="GO" id="GO:0050919">
    <property type="term" value="P:negative chemotaxis"/>
    <property type="evidence" value="ECO:0000318"/>
    <property type="project" value="GO_Central"/>
</dbReference>
<dbReference type="GO" id="GO:0001755">
    <property type="term" value="P:neural crest cell migration"/>
    <property type="evidence" value="ECO:0000318"/>
    <property type="project" value="GO_Central"/>
</dbReference>
<dbReference type="GO" id="GO:0030335">
    <property type="term" value="P:positive regulation of cell migration"/>
    <property type="evidence" value="ECO:0000318"/>
    <property type="project" value="GO_Central"/>
</dbReference>
<dbReference type="GO" id="GO:0071526">
    <property type="term" value="P:semaphorin-plexin signaling pathway"/>
    <property type="evidence" value="ECO:0000318"/>
    <property type="project" value="GO_Central"/>
</dbReference>
<dbReference type="CDD" id="cd05871">
    <property type="entry name" value="Ig_Sema3"/>
    <property type="match status" value="1"/>
</dbReference>
<dbReference type="CDD" id="cd11252">
    <property type="entry name" value="Sema_3D"/>
    <property type="match status" value="1"/>
</dbReference>
<dbReference type="FunFam" id="2.130.10.10:FF:000015">
    <property type="entry name" value="Semaphorin 3B"/>
    <property type="match status" value="1"/>
</dbReference>
<dbReference type="FunFam" id="2.60.40.10:FF:000030">
    <property type="entry name" value="Semaphorin 3F like"/>
    <property type="match status" value="1"/>
</dbReference>
<dbReference type="FunFam" id="3.30.1680.10:FF:000001">
    <property type="entry name" value="Semaphorin 3F like"/>
    <property type="match status" value="1"/>
</dbReference>
<dbReference type="Gene3D" id="2.60.40.10">
    <property type="entry name" value="Immunoglobulins"/>
    <property type="match status" value="1"/>
</dbReference>
<dbReference type="Gene3D" id="3.30.1680.10">
    <property type="entry name" value="ligand-binding face of the semaphorins, domain 2"/>
    <property type="match status" value="1"/>
</dbReference>
<dbReference type="Gene3D" id="2.130.10.10">
    <property type="entry name" value="YVTN repeat-like/Quinoprotein amine dehydrogenase"/>
    <property type="match status" value="1"/>
</dbReference>
<dbReference type="InterPro" id="IPR007110">
    <property type="entry name" value="Ig-like_dom"/>
</dbReference>
<dbReference type="InterPro" id="IPR036179">
    <property type="entry name" value="Ig-like_dom_sf"/>
</dbReference>
<dbReference type="InterPro" id="IPR013783">
    <property type="entry name" value="Ig-like_fold"/>
</dbReference>
<dbReference type="InterPro" id="IPR041416">
    <property type="entry name" value="IL-1RAcP-like_ig"/>
</dbReference>
<dbReference type="InterPro" id="IPR016201">
    <property type="entry name" value="PSI"/>
</dbReference>
<dbReference type="InterPro" id="IPR042582">
    <property type="entry name" value="Sema3D_Sema"/>
</dbReference>
<dbReference type="InterPro" id="IPR001627">
    <property type="entry name" value="Semap_dom"/>
</dbReference>
<dbReference type="InterPro" id="IPR036352">
    <property type="entry name" value="Semap_dom_sf"/>
</dbReference>
<dbReference type="InterPro" id="IPR027231">
    <property type="entry name" value="Semaphorin"/>
</dbReference>
<dbReference type="InterPro" id="IPR015943">
    <property type="entry name" value="WD40/YVTN_repeat-like_dom_sf"/>
</dbReference>
<dbReference type="PANTHER" id="PTHR11036">
    <property type="entry name" value="SEMAPHORIN"/>
    <property type="match status" value="1"/>
</dbReference>
<dbReference type="PANTHER" id="PTHR11036:SF36">
    <property type="entry name" value="SEMAPHORIN-3D"/>
    <property type="match status" value="1"/>
</dbReference>
<dbReference type="Pfam" id="PF18452">
    <property type="entry name" value="Ig_6"/>
    <property type="match status" value="1"/>
</dbReference>
<dbReference type="Pfam" id="PF01403">
    <property type="entry name" value="Sema"/>
    <property type="match status" value="1"/>
</dbReference>
<dbReference type="SMART" id="SM00423">
    <property type="entry name" value="PSI"/>
    <property type="match status" value="1"/>
</dbReference>
<dbReference type="SMART" id="SM00630">
    <property type="entry name" value="Sema"/>
    <property type="match status" value="1"/>
</dbReference>
<dbReference type="SUPFAM" id="SSF48726">
    <property type="entry name" value="Immunoglobulin"/>
    <property type="match status" value="1"/>
</dbReference>
<dbReference type="SUPFAM" id="SSF103575">
    <property type="entry name" value="Plexin repeat"/>
    <property type="match status" value="1"/>
</dbReference>
<dbReference type="SUPFAM" id="SSF101912">
    <property type="entry name" value="Sema domain"/>
    <property type="match status" value="1"/>
</dbReference>
<dbReference type="PROSITE" id="PS50835">
    <property type="entry name" value="IG_LIKE"/>
    <property type="match status" value="1"/>
</dbReference>
<dbReference type="PROSITE" id="PS51004">
    <property type="entry name" value="SEMA"/>
    <property type="match status" value="1"/>
</dbReference>